<gene>
    <name type="ordered locus">HSM_1274</name>
</gene>
<proteinExistence type="inferred from homology"/>
<accession>B0UTZ7</accession>
<name>Y1274_HISS2</name>
<feature type="chain" id="PRO_0000375313" description="YcgL domain-containing protein HSM_1274">
    <location>
        <begin position="1"/>
        <end position="92"/>
    </location>
</feature>
<feature type="domain" description="YcgL" evidence="1">
    <location>
        <begin position="1"/>
        <end position="85"/>
    </location>
</feature>
<dbReference type="EMBL" id="CP000947">
    <property type="protein sequence ID" value="ACA31003.1"/>
    <property type="molecule type" value="Genomic_DNA"/>
</dbReference>
<dbReference type="RefSeq" id="WP_011608958.1">
    <property type="nucleotide sequence ID" value="NC_010519.1"/>
</dbReference>
<dbReference type="SMR" id="B0UTZ7"/>
<dbReference type="STRING" id="228400.HSM_1274"/>
<dbReference type="GeneID" id="31487576"/>
<dbReference type="KEGG" id="hsm:HSM_1274"/>
<dbReference type="HOGENOM" id="CLU_155118_1_0_6"/>
<dbReference type="Gene3D" id="3.10.510.20">
    <property type="entry name" value="YcgL domain"/>
    <property type="match status" value="1"/>
</dbReference>
<dbReference type="HAMAP" id="MF_01866">
    <property type="entry name" value="UPF0745"/>
    <property type="match status" value="1"/>
</dbReference>
<dbReference type="InterPro" id="IPR038068">
    <property type="entry name" value="YcgL-like_sf"/>
</dbReference>
<dbReference type="InterPro" id="IPR027354">
    <property type="entry name" value="YcgL_dom"/>
</dbReference>
<dbReference type="PANTHER" id="PTHR38109">
    <property type="entry name" value="PROTEIN YCGL"/>
    <property type="match status" value="1"/>
</dbReference>
<dbReference type="PANTHER" id="PTHR38109:SF1">
    <property type="entry name" value="PROTEIN YCGL"/>
    <property type="match status" value="1"/>
</dbReference>
<dbReference type="Pfam" id="PF05166">
    <property type="entry name" value="YcgL"/>
    <property type="match status" value="1"/>
</dbReference>
<dbReference type="SUPFAM" id="SSF160191">
    <property type="entry name" value="YcgL-like"/>
    <property type="match status" value="1"/>
</dbReference>
<dbReference type="PROSITE" id="PS51648">
    <property type="entry name" value="YCGL"/>
    <property type="match status" value="1"/>
</dbReference>
<reference key="1">
    <citation type="submission" date="2008-02" db="EMBL/GenBank/DDBJ databases">
        <title>Complete sequence of Haemophilus somnus 2336.</title>
        <authorList>
            <consortium name="US DOE Joint Genome Institute"/>
            <person name="Siddaramappa S."/>
            <person name="Duncan A.J."/>
            <person name="Challacombe J.F."/>
            <person name="Rainey D."/>
            <person name="Gillaspy A.F."/>
            <person name="Carson M."/>
            <person name="Gipson J."/>
            <person name="Gipson M."/>
            <person name="Bruce D."/>
            <person name="Detter J.C."/>
            <person name="Han C.S."/>
            <person name="Land M."/>
            <person name="Tapia R."/>
            <person name="Thompson L.S."/>
            <person name="Orvis J."/>
            <person name="Zaitshik J."/>
            <person name="Barnes G."/>
            <person name="Brettin T.S."/>
            <person name="Dyer D.W."/>
            <person name="Inzana T.J."/>
        </authorList>
    </citation>
    <scope>NUCLEOTIDE SEQUENCE [LARGE SCALE GENOMIC DNA]</scope>
    <source>
        <strain>2336</strain>
    </source>
</reference>
<organism>
    <name type="scientific">Histophilus somni (strain 2336)</name>
    <name type="common">Haemophilus somnus</name>
    <dbReference type="NCBI Taxonomy" id="228400"/>
    <lineage>
        <taxon>Bacteria</taxon>
        <taxon>Pseudomonadati</taxon>
        <taxon>Pseudomonadota</taxon>
        <taxon>Gammaproteobacteria</taxon>
        <taxon>Pasteurellales</taxon>
        <taxon>Pasteurellaceae</taxon>
        <taxon>Histophilus</taxon>
    </lineage>
</organism>
<evidence type="ECO:0000255" key="1">
    <source>
        <dbReference type="HAMAP-Rule" id="MF_01866"/>
    </source>
</evidence>
<sequence length="92" mass="10871">MLCAIYKTKRKEGMYLYIEKRGHFDSVPSSLLESFGKPIFVMLFNLAGQKSLINANNEDVQQQIKQNGFYLQMPKQQENLLEQERQYLKHNK</sequence>
<protein>
    <recommendedName>
        <fullName evidence="1">YcgL domain-containing protein HSM_1274</fullName>
    </recommendedName>
</protein>